<accession>Q81HD0</accession>
<proteinExistence type="inferred from homology"/>
<dbReference type="EC" id="3.2.2.-" evidence="1"/>
<dbReference type="EMBL" id="AE016877">
    <property type="protein sequence ID" value="AAP07872.1"/>
    <property type="molecule type" value="Genomic_DNA"/>
</dbReference>
<dbReference type="RefSeq" id="NP_830671.1">
    <property type="nucleotide sequence ID" value="NC_004722.1"/>
</dbReference>
<dbReference type="RefSeq" id="WP_001148797.1">
    <property type="nucleotide sequence ID" value="NZ_CP138336.1"/>
</dbReference>
<dbReference type="SMR" id="Q81HD0"/>
<dbReference type="STRING" id="226900.BC_0885"/>
<dbReference type="KEGG" id="bce:BC0885"/>
<dbReference type="PATRIC" id="fig|226900.8.peg.829"/>
<dbReference type="HOGENOM" id="CLU_060471_0_2_9"/>
<dbReference type="OrthoDB" id="9794313at2"/>
<dbReference type="Proteomes" id="UP000001417">
    <property type="component" value="Chromosome"/>
</dbReference>
<dbReference type="GO" id="GO:0003905">
    <property type="term" value="F:alkylbase DNA N-glycosylase activity"/>
    <property type="evidence" value="ECO:0000318"/>
    <property type="project" value="GO_Central"/>
</dbReference>
<dbReference type="GO" id="GO:0003677">
    <property type="term" value="F:DNA binding"/>
    <property type="evidence" value="ECO:0007669"/>
    <property type="project" value="InterPro"/>
</dbReference>
<dbReference type="GO" id="GO:0006284">
    <property type="term" value="P:base-excision repair"/>
    <property type="evidence" value="ECO:0000318"/>
    <property type="project" value="GO_Central"/>
</dbReference>
<dbReference type="CDD" id="cd00540">
    <property type="entry name" value="AAG"/>
    <property type="match status" value="1"/>
</dbReference>
<dbReference type="FunFam" id="3.10.300.10:FF:000001">
    <property type="entry name" value="Putative 3-methyladenine DNA glycosylase"/>
    <property type="match status" value="1"/>
</dbReference>
<dbReference type="Gene3D" id="3.10.300.10">
    <property type="entry name" value="Methylpurine-DNA glycosylase (MPG)"/>
    <property type="match status" value="1"/>
</dbReference>
<dbReference type="HAMAP" id="MF_00527">
    <property type="entry name" value="3MGH"/>
    <property type="match status" value="1"/>
</dbReference>
<dbReference type="InterPro" id="IPR011034">
    <property type="entry name" value="Formyl_transferase-like_C_sf"/>
</dbReference>
<dbReference type="InterPro" id="IPR003180">
    <property type="entry name" value="MPG"/>
</dbReference>
<dbReference type="InterPro" id="IPR036995">
    <property type="entry name" value="MPG_sf"/>
</dbReference>
<dbReference type="NCBIfam" id="TIGR00567">
    <property type="entry name" value="3mg"/>
    <property type="match status" value="1"/>
</dbReference>
<dbReference type="NCBIfam" id="NF002001">
    <property type="entry name" value="PRK00802.1-1"/>
    <property type="match status" value="1"/>
</dbReference>
<dbReference type="NCBIfam" id="NF002003">
    <property type="entry name" value="PRK00802.1-3"/>
    <property type="match status" value="1"/>
</dbReference>
<dbReference type="PANTHER" id="PTHR10429">
    <property type="entry name" value="DNA-3-METHYLADENINE GLYCOSYLASE"/>
    <property type="match status" value="1"/>
</dbReference>
<dbReference type="PANTHER" id="PTHR10429:SF0">
    <property type="entry name" value="DNA-3-METHYLADENINE GLYCOSYLASE"/>
    <property type="match status" value="1"/>
</dbReference>
<dbReference type="Pfam" id="PF02245">
    <property type="entry name" value="Pur_DNA_glyco"/>
    <property type="match status" value="1"/>
</dbReference>
<dbReference type="SUPFAM" id="SSF50486">
    <property type="entry name" value="FMT C-terminal domain-like"/>
    <property type="match status" value="1"/>
</dbReference>
<comment type="similarity">
    <text evidence="1">Belongs to the DNA glycosylase MPG family.</text>
</comment>
<reference key="1">
    <citation type="journal article" date="2003" name="Nature">
        <title>Genome sequence of Bacillus cereus and comparative analysis with Bacillus anthracis.</title>
        <authorList>
            <person name="Ivanova N."/>
            <person name="Sorokin A."/>
            <person name="Anderson I."/>
            <person name="Galleron N."/>
            <person name="Candelon B."/>
            <person name="Kapatral V."/>
            <person name="Bhattacharyya A."/>
            <person name="Reznik G."/>
            <person name="Mikhailova N."/>
            <person name="Lapidus A."/>
            <person name="Chu L."/>
            <person name="Mazur M."/>
            <person name="Goltsman E."/>
            <person name="Larsen N."/>
            <person name="D'Souza M."/>
            <person name="Walunas T."/>
            <person name="Grechkin Y."/>
            <person name="Pusch G."/>
            <person name="Haselkorn R."/>
            <person name="Fonstein M."/>
            <person name="Ehrlich S.D."/>
            <person name="Overbeek R."/>
            <person name="Kyrpides N.C."/>
        </authorList>
    </citation>
    <scope>NUCLEOTIDE SEQUENCE [LARGE SCALE GENOMIC DNA]</scope>
    <source>
        <strain>ATCC 14579 / DSM 31 / CCUG 7414 / JCM 2152 / NBRC 15305 / NCIMB 9373 / NCTC 2599 / NRRL B-3711</strain>
    </source>
</reference>
<feature type="chain" id="PRO_0000100072" description="Putative 3-methyladenine DNA glycosylase">
    <location>
        <begin position="1"/>
        <end position="205"/>
    </location>
</feature>
<sequence length="205" mass="22979">MQAPPSFYEGDTLEVAKKLLGQKLVHIVDGIKRSGIIVEVEAYKGPDDKAAHSYGGRRTDRTEVMFGAPGHAYVYLIYGMYHCFNVITAPVGTPQGVLIRALEPVDGIEEIKLARYNKTEITKAQYKNLTNGPGKLCRALGITLKERGVSLQSDTLHIELVPKEEHISSQYKITAGPRINIDYAEEAVHYPWRFYYEGHPFVSKK</sequence>
<protein>
    <recommendedName>
        <fullName evidence="1">Putative 3-methyladenine DNA glycosylase</fullName>
        <ecNumber evidence="1">3.2.2.-</ecNumber>
    </recommendedName>
</protein>
<gene>
    <name type="ordered locus">BC_0885</name>
</gene>
<evidence type="ECO:0000255" key="1">
    <source>
        <dbReference type="HAMAP-Rule" id="MF_00527"/>
    </source>
</evidence>
<keyword id="KW-0227">DNA damage</keyword>
<keyword id="KW-0234">DNA repair</keyword>
<keyword id="KW-0378">Hydrolase</keyword>
<keyword id="KW-1185">Reference proteome</keyword>
<name>3MGH_BACCR</name>
<organism>
    <name type="scientific">Bacillus cereus (strain ATCC 14579 / DSM 31 / CCUG 7414 / JCM 2152 / NBRC 15305 / NCIMB 9373 / NCTC 2599 / NRRL B-3711)</name>
    <dbReference type="NCBI Taxonomy" id="226900"/>
    <lineage>
        <taxon>Bacteria</taxon>
        <taxon>Bacillati</taxon>
        <taxon>Bacillota</taxon>
        <taxon>Bacilli</taxon>
        <taxon>Bacillales</taxon>
        <taxon>Bacillaceae</taxon>
        <taxon>Bacillus</taxon>
        <taxon>Bacillus cereus group</taxon>
    </lineage>
</organism>